<feature type="chain" id="PRO_0000191065" description="Solute carrier organic anion transporter family member 3A1">
    <location>
        <begin position="1"/>
        <end position="710"/>
    </location>
</feature>
<feature type="topological domain" description="Cytoplasmic" evidence="2">
    <location>
        <begin position="1"/>
        <end position="40"/>
    </location>
</feature>
<feature type="transmembrane region" description="Helical; Name=1" evidence="2">
    <location>
        <begin position="41"/>
        <end position="60"/>
    </location>
</feature>
<feature type="topological domain" description="Extracellular" evidence="2">
    <location>
        <begin position="61"/>
        <end position="79"/>
    </location>
</feature>
<feature type="transmembrane region" description="Helical; Name=2" evidence="2">
    <location>
        <begin position="80"/>
        <end position="100"/>
    </location>
</feature>
<feature type="topological domain" description="Cytoplasmic" evidence="2">
    <location>
        <begin position="101"/>
        <end position="106"/>
    </location>
</feature>
<feature type="transmembrane region" description="Helical; Name=3" evidence="2">
    <location>
        <begin position="107"/>
        <end position="131"/>
    </location>
</feature>
<feature type="topological domain" description="Extracellular" evidence="2">
    <location>
        <begin position="132"/>
        <end position="174"/>
    </location>
</feature>
<feature type="transmembrane region" description="Helical; Name=4" evidence="2">
    <location>
        <begin position="175"/>
        <end position="203"/>
    </location>
</feature>
<feature type="topological domain" description="Cytoplasmic" evidence="2">
    <location>
        <begin position="204"/>
        <end position="222"/>
    </location>
</feature>
<feature type="transmembrane region" description="Helical; Name=5" evidence="2">
    <location>
        <begin position="223"/>
        <end position="243"/>
    </location>
</feature>
<feature type="topological domain" description="Extracellular" evidence="2">
    <location>
        <begin position="244"/>
        <end position="261"/>
    </location>
</feature>
<feature type="transmembrane region" description="Helical; Name=6" evidence="2">
    <location>
        <begin position="262"/>
        <end position="286"/>
    </location>
</feature>
<feature type="topological domain" description="Cytoplasmic" evidence="2">
    <location>
        <begin position="287"/>
        <end position="344"/>
    </location>
</feature>
<feature type="transmembrane region" description="Helical; Name=7" evidence="2">
    <location>
        <begin position="345"/>
        <end position="366"/>
    </location>
</feature>
<feature type="topological domain" description="Extracellular" evidence="2">
    <location>
        <begin position="367"/>
        <end position="386"/>
    </location>
</feature>
<feature type="transmembrane region" description="Helical; Name=8" evidence="2">
    <location>
        <begin position="387"/>
        <end position="410"/>
    </location>
</feature>
<feature type="topological domain" description="Cytoplasmic" evidence="2">
    <location>
        <begin position="411"/>
        <end position="414"/>
    </location>
</feature>
<feature type="transmembrane region" description="Helical; Name=9" evidence="2">
    <location>
        <begin position="415"/>
        <end position="438"/>
    </location>
</feature>
<feature type="topological domain" description="Extracellular" evidence="2">
    <location>
        <begin position="439"/>
        <end position="539"/>
    </location>
</feature>
<feature type="transmembrane region" description="Helical; Name=10" evidence="2">
    <location>
        <begin position="540"/>
        <end position="562"/>
    </location>
</feature>
<feature type="topological domain" description="Cytoplasmic" evidence="2">
    <location>
        <begin position="563"/>
        <end position="571"/>
    </location>
</feature>
<feature type="transmembrane region" description="Helical; Name=11" evidence="2">
    <location>
        <begin position="572"/>
        <end position="597"/>
    </location>
</feature>
<feature type="topological domain" description="Extracellular" evidence="2">
    <location>
        <begin position="598"/>
        <end position="630"/>
    </location>
</feature>
<feature type="transmembrane region" description="Helical; Name=12" evidence="2">
    <location>
        <begin position="631"/>
        <end position="648"/>
    </location>
</feature>
<feature type="topological domain" description="Cytoplasmic" evidence="2">
    <location>
        <begin position="649"/>
        <end position="705"/>
    </location>
</feature>
<feature type="domain" description="Kazal-like" evidence="3">
    <location>
        <begin position="465"/>
        <end position="513"/>
    </location>
</feature>
<feature type="region of interest" description="Disordered" evidence="4">
    <location>
        <begin position="1"/>
        <end position="25"/>
    </location>
</feature>
<feature type="compositionally biased region" description="Gly residues" evidence="4">
    <location>
        <begin position="1"/>
        <end position="15"/>
    </location>
</feature>
<feature type="modified residue" description="N-acetylmethionine" evidence="1">
    <location>
        <position position="1"/>
    </location>
</feature>
<feature type="glycosylation site" description="N-linked (GlcNAc...) asparagine" evidence="2">
    <location>
        <position position="153"/>
    </location>
</feature>
<feature type="glycosylation site" description="N-linked (GlcNAc...) asparagine" evidence="2">
    <location>
        <position position="169"/>
    </location>
</feature>
<feature type="glycosylation site" description="N-linked (GlcNAc...) asparagine" evidence="2">
    <location>
        <position position="381"/>
    </location>
</feature>
<feature type="glycosylation site" description="N-linked (GlcNAc...) asparagine" evidence="2">
    <location>
        <position position="457"/>
    </location>
</feature>
<feature type="glycosylation site" description="N-linked (GlcNAc...) asparagine" evidence="2">
    <location>
        <position position="502"/>
    </location>
</feature>
<feature type="glycosylation site" description="N-linked (GlcNAc...) asparagine" evidence="2">
    <location>
        <position position="505"/>
    </location>
</feature>
<feature type="glycosylation site" description="N-linked (GlcNAc...) asparagine" evidence="2">
    <location>
        <position position="519"/>
    </location>
</feature>
<feature type="disulfide bond" evidence="3">
    <location>
        <begin position="471"/>
        <end position="497"/>
    </location>
</feature>
<feature type="disulfide bond" evidence="3">
    <location>
        <begin position="475"/>
        <end position="486"/>
    </location>
</feature>
<feature type="disulfide bond" evidence="3">
    <location>
        <begin position="477"/>
        <end position="501"/>
    </location>
</feature>
<feature type="splice variant" id="VSP_036839" description="In isoform 2." evidence="6 7">
    <original>EFFASTLTLDNLGRDPVPAHQTHRTK</original>
    <variation>TEYQDIETEKTCPESQSPSEDSFVRS</variation>
    <location>
        <begin position="667"/>
        <end position="692"/>
    </location>
</feature>
<feature type="splice variant" id="VSP_036840" description="In isoform 2." evidence="6 7">
    <location>
        <begin position="693"/>
        <end position="710"/>
    </location>
</feature>
<feature type="sequence conflict" description="In Ref. 1; AAF35370." evidence="8" ref="1">
    <original>G</original>
    <variation>D</variation>
    <location>
        <position position="7"/>
    </location>
</feature>
<feature type="sequence conflict" description="In Ref. 2; BAE38670." evidence="8" ref="2">
    <original>R</original>
    <variation>G</variation>
    <location>
        <position position="14"/>
    </location>
</feature>
<feature type="sequence conflict" description="In Ref. 1; AAF35370." evidence="8" ref="1">
    <original>G</original>
    <variation>V</variation>
    <location>
        <position position="138"/>
    </location>
</feature>
<feature type="sequence conflict" description="In Ref. 1; AAF35370." evidence="8" ref="1">
    <original>G</original>
    <variation>E</variation>
    <location>
        <position position="143"/>
    </location>
</feature>
<feature type="sequence conflict" description="In Ref. 1; AAF35370." evidence="8" ref="1">
    <original>R</original>
    <variation>T</variation>
    <location>
        <position position="147"/>
    </location>
</feature>
<feature type="sequence conflict" description="In Ref. 1; AAF35370." evidence="8" ref="1">
    <original>EG</original>
    <variation>DR</variation>
    <location>
        <begin position="159"/>
        <end position="160"/>
    </location>
</feature>
<feature type="sequence conflict" description="In Ref. 1; AAF35370." evidence="8" ref="1">
    <original>L</original>
    <variation>M</variation>
    <location>
        <position position="178"/>
    </location>
</feature>
<feature type="sequence conflict" description="In Ref. 1; AAF35370." evidence="8" ref="1">
    <original>N</original>
    <variation>K</variation>
    <location>
        <position position="428"/>
    </location>
</feature>
<feature type="sequence conflict" description="In Ref. 1; AAF35370." evidence="8" ref="1">
    <original>F</original>
    <variation>L</variation>
    <location>
        <position position="603"/>
    </location>
</feature>
<feature type="sequence conflict" description="In Ref. 2; BAE31259." evidence="8" ref="2">
    <original>D</original>
    <variation>G</variation>
    <location>
        <position position="681"/>
    </location>
</feature>
<feature type="sequence conflict" description="In Ref. 2; BAE31259." evidence="8" ref="2">
    <original>Q</original>
    <variation>L</variation>
    <location>
        <position position="687"/>
    </location>
</feature>
<evidence type="ECO:0000250" key="1">
    <source>
        <dbReference type="UniProtKB" id="Q9UIG8"/>
    </source>
</evidence>
<evidence type="ECO:0000255" key="2"/>
<evidence type="ECO:0000255" key="3">
    <source>
        <dbReference type="PROSITE-ProRule" id="PRU00798"/>
    </source>
</evidence>
<evidence type="ECO:0000256" key="4">
    <source>
        <dbReference type="SAM" id="MobiDB-lite"/>
    </source>
</evidence>
<evidence type="ECO:0000269" key="5">
    <source>
    </source>
</evidence>
<evidence type="ECO:0000303" key="6">
    <source>
    </source>
</evidence>
<evidence type="ECO:0000303" key="7">
    <source>
    </source>
</evidence>
<evidence type="ECO:0000305" key="8"/>
<comment type="function">
    <text evidence="1 8">Putative organic anion antiporter with apparent broad substrate specificity. Recognizes various substrates including thyroid hormone L-thyroxine, prostanoids such as prostaglandin E1 and E2, bile acids such as taurocholate, glycolate and glycochenodeoxycholate and peptide hormones such as L-arginine vasopressin, likely operating in a tissue-specific manner (By similarity). The transport mechanism, its electrogenicity and potential tissue-specific counterions remain to be elucidated (Probable).</text>
</comment>
<comment type="catalytic activity">
    <reaction evidence="1">
        <text>L-thyroxine(out) = L-thyroxine(in)</text>
        <dbReference type="Rhea" id="RHEA:71819"/>
        <dbReference type="ChEBI" id="CHEBI:58448"/>
    </reaction>
    <physiologicalReaction direction="left-to-right" evidence="1">
        <dbReference type="Rhea" id="RHEA:71820"/>
    </physiologicalReaction>
</comment>
<comment type="catalytic activity">
    <reaction evidence="1">
        <text>prostaglandin E1(out) = prostaglandin E1(in)</text>
        <dbReference type="Rhea" id="RHEA:50980"/>
        <dbReference type="ChEBI" id="CHEBI:57397"/>
    </reaction>
    <physiologicalReaction direction="left-to-right" evidence="1">
        <dbReference type="Rhea" id="RHEA:50981"/>
    </physiologicalReaction>
</comment>
<comment type="catalytic activity">
    <reaction evidence="1">
        <text>prostaglandin E2(out) = prostaglandin E2(in)</text>
        <dbReference type="Rhea" id="RHEA:50984"/>
        <dbReference type="ChEBI" id="CHEBI:606564"/>
    </reaction>
    <physiologicalReaction direction="left-to-right" evidence="1">
        <dbReference type="Rhea" id="RHEA:50985"/>
    </physiologicalReaction>
</comment>
<comment type="catalytic activity">
    <reaction evidence="1">
        <text>prostaglandin F2alpha(out) = prostaglandin F2alpha(in)</text>
        <dbReference type="Rhea" id="RHEA:50988"/>
        <dbReference type="ChEBI" id="CHEBI:57404"/>
    </reaction>
    <physiologicalReaction direction="left-to-right" evidence="1">
        <dbReference type="Rhea" id="RHEA:50989"/>
    </physiologicalReaction>
</comment>
<comment type="catalytic activity">
    <reaction evidence="1">
        <text>(5Z,8Z,11Z,14Z)-eicosatetraenoate(out) = (5Z,8Z,11Z,14Z)-eicosatetraenoate(in)</text>
        <dbReference type="Rhea" id="RHEA:71395"/>
        <dbReference type="ChEBI" id="CHEBI:32395"/>
    </reaction>
    <physiologicalReaction direction="left-to-right" evidence="1">
        <dbReference type="Rhea" id="RHEA:71396"/>
    </physiologicalReaction>
</comment>
<comment type="catalytic activity">
    <reaction evidence="1">
        <text>taurocholate(out) = taurocholate(in)</text>
        <dbReference type="Rhea" id="RHEA:71703"/>
        <dbReference type="ChEBI" id="CHEBI:36257"/>
    </reaction>
    <physiologicalReaction direction="right-to-left" evidence="1">
        <dbReference type="Rhea" id="RHEA:71705"/>
    </physiologicalReaction>
</comment>
<comment type="catalytic activity">
    <reaction evidence="1">
        <text>glycocholate(out) = glycocholate(in)</text>
        <dbReference type="Rhea" id="RHEA:71851"/>
        <dbReference type="ChEBI" id="CHEBI:29746"/>
    </reaction>
    <physiologicalReaction direction="right-to-left" evidence="1">
        <dbReference type="Rhea" id="RHEA:71853"/>
    </physiologicalReaction>
</comment>
<comment type="catalytic activity">
    <reaction evidence="1">
        <text>estrone 3-sulfate(out) = estrone 3-sulfate(in)</text>
        <dbReference type="Rhea" id="RHEA:71835"/>
        <dbReference type="ChEBI" id="CHEBI:60050"/>
    </reaction>
    <physiologicalReaction direction="left-to-right" evidence="1">
        <dbReference type="Rhea" id="RHEA:71836"/>
    </physiologicalReaction>
</comment>
<comment type="catalytic activity">
    <reaction evidence="1">
        <text>argipressin(out) = argipressin(in)</text>
        <dbReference type="Rhea" id="RHEA:75979"/>
        <dbReference type="ChEBI" id="CHEBI:194507"/>
    </reaction>
    <physiologicalReaction direction="left-to-right" evidence="1">
        <dbReference type="Rhea" id="RHEA:75980"/>
    </physiologicalReaction>
</comment>
<comment type="subcellular location">
    <subcellularLocation>
        <location evidence="1">Basolateral cell membrane</location>
        <topology evidence="2">Multi-pass membrane protein</topology>
    </subcellularLocation>
    <subcellularLocation>
        <location evidence="1">Apical cell membrane</location>
        <topology evidence="2">Multi-pass membrane protein</topology>
    </subcellularLocation>
    <subcellularLocation>
        <location evidence="1">Basal cell membrane</location>
        <topology evidence="2">Multi-pass membrane protein</topology>
    </subcellularLocation>
</comment>
<comment type="alternative products">
    <event type="alternative splicing"/>
    <isoform>
        <id>Q8R3L5-1</id>
        <name>1</name>
        <sequence type="displayed"/>
    </isoform>
    <isoform>
        <id>Q8R3L5-2</id>
        <name>2</name>
        <sequence type="described" ref="VSP_036839 VSP_036840"/>
    </isoform>
</comment>
<comment type="tissue specificity">
    <text>Widely expressed.</text>
</comment>
<comment type="induction">
    <text>By androgens in kidney and lung.</text>
</comment>
<comment type="disruption phenotype">
    <text evidence="5">In a cholestasis model, mutant mice show decreased survival rate associated with excessive accumulation of bile acids in liver.</text>
</comment>
<comment type="similarity">
    <text evidence="8">Belongs to the organo anion transporter (TC 2.A.60) family.</text>
</comment>
<organism>
    <name type="scientific">Mus musculus</name>
    <name type="common">Mouse</name>
    <dbReference type="NCBI Taxonomy" id="10090"/>
    <lineage>
        <taxon>Eukaryota</taxon>
        <taxon>Metazoa</taxon>
        <taxon>Chordata</taxon>
        <taxon>Craniata</taxon>
        <taxon>Vertebrata</taxon>
        <taxon>Euteleostomi</taxon>
        <taxon>Mammalia</taxon>
        <taxon>Eutheria</taxon>
        <taxon>Euarchontoglires</taxon>
        <taxon>Glires</taxon>
        <taxon>Rodentia</taxon>
        <taxon>Myomorpha</taxon>
        <taxon>Muroidea</taxon>
        <taxon>Muridae</taxon>
        <taxon>Murinae</taxon>
        <taxon>Mus</taxon>
        <taxon>Mus</taxon>
    </lineage>
</organism>
<protein>
    <recommendedName>
        <fullName>Solute carrier organic anion transporter family member 3A1</fullName>
    </recommendedName>
    <alternativeName>
        <fullName>MJAM</fullName>
    </alternativeName>
    <alternativeName>
        <fullName>Organic anion-transporting polypeptide D</fullName>
        <shortName>OATP-D</shortName>
    </alternativeName>
    <alternativeName>
        <fullName>Sodium-independent organic anion transporter D</fullName>
    </alternativeName>
    <alternativeName>
        <fullName>Solute carrier family 21 member 11</fullName>
    </alternativeName>
</protein>
<name>SO3A1_MOUSE</name>
<keyword id="KW-0007">Acetylation</keyword>
<keyword id="KW-0025">Alternative splicing</keyword>
<keyword id="KW-1003">Cell membrane</keyword>
<keyword id="KW-1015">Disulfide bond</keyword>
<keyword id="KW-0325">Glycoprotein</keyword>
<keyword id="KW-0406">Ion transport</keyword>
<keyword id="KW-0472">Membrane</keyword>
<keyword id="KW-1185">Reference proteome</keyword>
<keyword id="KW-0812">Transmembrane</keyword>
<keyword id="KW-1133">Transmembrane helix</keyword>
<keyword id="KW-0813">Transport</keyword>
<sequence>MQGKKPGGSSGGGRSGELQGDEAQRNKKKKKKVSCFSNIKIFLVSECALMLAQGTVGAYLVSVLTTLERRFNLQSADVGVIASSFEIGNLALILFVSYFGARGHRPRLIGCGGIVMALGALLSALPEFLTHQYKYEAGEIRWGAEGRDVCATNGSSSDEGPDPDLICRNRTATNMMYLLLIGAQVLLGIGATPVQPLGVSYIDDHVRRKDSSLYIGILFTMLVFGPACGFILGSFCTKIYVDAVFIDTSNLDITPDDPRWIGAWWGGFLLCGALLFFSSLLMFGFPQSLPPHSDPGMESEQAMLPEREYERPKPSNGVLRHPLEPDSSASCFQQLRVIPKVTKHLLSNPVFTCIVLAACMEIAVVAGFAAFLGKYLEQQFNLTTSSANQLLGMTAIPCACLGIFLGGLLVKKLSLSALGAIRMAMLVNLVSTACYVSFLFLGCDTGPVAGVTVRYGNNSARGSALDPYSPCNNNCECQTDSFTPVCGADGITYLSACFAGCNSTNLTGCACLTTVPPENASVVPGKCPSPGCQEAFLTFLCVMCVCSLIGAMAQTPSVIILIRTVSPELKSYALGVLFLLLRLLGFIPPPLIFGAGIDSTCLFWSTFCGEQGACVLYDNVVYRYLYVSIAIALKSFAFILYTTTWQCLRKNYKRYIKNHEGGLSTSEFFASTLTLDNLGRDPVPAHQTHRTKFIYNLEDHEWCENMESVL</sequence>
<reference key="1">
    <citation type="submission" date="2000-01" db="EMBL/GenBank/DDBJ databases">
        <title>Mus musculus organic anion transporting polypeptide MJAM.</title>
        <authorList>
            <person name="Isern J."/>
            <person name="Menoyo A."/>
            <person name="Melia M.J."/>
            <person name="Meseguer A."/>
        </authorList>
    </citation>
    <scope>NUCLEOTIDE SEQUENCE [MRNA] (ISOFORM 1)</scope>
    <source>
        <strain>C57BL/6J</strain>
        <tissue>Kidney</tissue>
    </source>
</reference>
<reference key="2">
    <citation type="journal article" date="2005" name="Science">
        <title>The transcriptional landscape of the mammalian genome.</title>
        <authorList>
            <person name="Carninci P."/>
            <person name="Kasukawa T."/>
            <person name="Katayama S."/>
            <person name="Gough J."/>
            <person name="Frith M.C."/>
            <person name="Maeda N."/>
            <person name="Oyama R."/>
            <person name="Ravasi T."/>
            <person name="Lenhard B."/>
            <person name="Wells C."/>
            <person name="Kodzius R."/>
            <person name="Shimokawa K."/>
            <person name="Bajic V.B."/>
            <person name="Brenner S.E."/>
            <person name="Batalov S."/>
            <person name="Forrest A.R."/>
            <person name="Zavolan M."/>
            <person name="Davis M.J."/>
            <person name="Wilming L.G."/>
            <person name="Aidinis V."/>
            <person name="Allen J.E."/>
            <person name="Ambesi-Impiombato A."/>
            <person name="Apweiler R."/>
            <person name="Aturaliya R.N."/>
            <person name="Bailey T.L."/>
            <person name="Bansal M."/>
            <person name="Baxter L."/>
            <person name="Beisel K.W."/>
            <person name="Bersano T."/>
            <person name="Bono H."/>
            <person name="Chalk A.M."/>
            <person name="Chiu K.P."/>
            <person name="Choudhary V."/>
            <person name="Christoffels A."/>
            <person name="Clutterbuck D.R."/>
            <person name="Crowe M.L."/>
            <person name="Dalla E."/>
            <person name="Dalrymple B.P."/>
            <person name="de Bono B."/>
            <person name="Della Gatta G."/>
            <person name="di Bernardo D."/>
            <person name="Down T."/>
            <person name="Engstrom P."/>
            <person name="Fagiolini M."/>
            <person name="Faulkner G."/>
            <person name="Fletcher C.F."/>
            <person name="Fukushima T."/>
            <person name="Furuno M."/>
            <person name="Futaki S."/>
            <person name="Gariboldi M."/>
            <person name="Georgii-Hemming P."/>
            <person name="Gingeras T.R."/>
            <person name="Gojobori T."/>
            <person name="Green R.E."/>
            <person name="Gustincich S."/>
            <person name="Harbers M."/>
            <person name="Hayashi Y."/>
            <person name="Hensch T.K."/>
            <person name="Hirokawa N."/>
            <person name="Hill D."/>
            <person name="Huminiecki L."/>
            <person name="Iacono M."/>
            <person name="Ikeo K."/>
            <person name="Iwama A."/>
            <person name="Ishikawa T."/>
            <person name="Jakt M."/>
            <person name="Kanapin A."/>
            <person name="Katoh M."/>
            <person name="Kawasawa Y."/>
            <person name="Kelso J."/>
            <person name="Kitamura H."/>
            <person name="Kitano H."/>
            <person name="Kollias G."/>
            <person name="Krishnan S.P."/>
            <person name="Kruger A."/>
            <person name="Kummerfeld S.K."/>
            <person name="Kurochkin I.V."/>
            <person name="Lareau L.F."/>
            <person name="Lazarevic D."/>
            <person name="Lipovich L."/>
            <person name="Liu J."/>
            <person name="Liuni S."/>
            <person name="McWilliam S."/>
            <person name="Madan Babu M."/>
            <person name="Madera M."/>
            <person name="Marchionni L."/>
            <person name="Matsuda H."/>
            <person name="Matsuzawa S."/>
            <person name="Miki H."/>
            <person name="Mignone F."/>
            <person name="Miyake S."/>
            <person name="Morris K."/>
            <person name="Mottagui-Tabar S."/>
            <person name="Mulder N."/>
            <person name="Nakano N."/>
            <person name="Nakauchi H."/>
            <person name="Ng P."/>
            <person name="Nilsson R."/>
            <person name="Nishiguchi S."/>
            <person name="Nishikawa S."/>
            <person name="Nori F."/>
            <person name="Ohara O."/>
            <person name="Okazaki Y."/>
            <person name="Orlando V."/>
            <person name="Pang K.C."/>
            <person name="Pavan W.J."/>
            <person name="Pavesi G."/>
            <person name="Pesole G."/>
            <person name="Petrovsky N."/>
            <person name="Piazza S."/>
            <person name="Reed J."/>
            <person name="Reid J.F."/>
            <person name="Ring B.Z."/>
            <person name="Ringwald M."/>
            <person name="Rost B."/>
            <person name="Ruan Y."/>
            <person name="Salzberg S.L."/>
            <person name="Sandelin A."/>
            <person name="Schneider C."/>
            <person name="Schoenbach C."/>
            <person name="Sekiguchi K."/>
            <person name="Semple C.A."/>
            <person name="Seno S."/>
            <person name="Sessa L."/>
            <person name="Sheng Y."/>
            <person name="Shibata Y."/>
            <person name="Shimada H."/>
            <person name="Shimada K."/>
            <person name="Silva D."/>
            <person name="Sinclair B."/>
            <person name="Sperling S."/>
            <person name="Stupka E."/>
            <person name="Sugiura K."/>
            <person name="Sultana R."/>
            <person name="Takenaka Y."/>
            <person name="Taki K."/>
            <person name="Tammoja K."/>
            <person name="Tan S.L."/>
            <person name="Tang S."/>
            <person name="Taylor M.S."/>
            <person name="Tegner J."/>
            <person name="Teichmann S.A."/>
            <person name="Ueda H.R."/>
            <person name="van Nimwegen E."/>
            <person name="Verardo R."/>
            <person name="Wei C.L."/>
            <person name="Yagi K."/>
            <person name="Yamanishi H."/>
            <person name="Zabarovsky E."/>
            <person name="Zhu S."/>
            <person name="Zimmer A."/>
            <person name="Hide W."/>
            <person name="Bult C."/>
            <person name="Grimmond S.M."/>
            <person name="Teasdale R.D."/>
            <person name="Liu E.T."/>
            <person name="Brusic V."/>
            <person name="Quackenbush J."/>
            <person name="Wahlestedt C."/>
            <person name="Mattick J.S."/>
            <person name="Hume D.A."/>
            <person name="Kai C."/>
            <person name="Sasaki D."/>
            <person name="Tomaru Y."/>
            <person name="Fukuda S."/>
            <person name="Kanamori-Katayama M."/>
            <person name="Suzuki M."/>
            <person name="Aoki J."/>
            <person name="Arakawa T."/>
            <person name="Iida J."/>
            <person name="Imamura K."/>
            <person name="Itoh M."/>
            <person name="Kato T."/>
            <person name="Kawaji H."/>
            <person name="Kawagashira N."/>
            <person name="Kawashima T."/>
            <person name="Kojima M."/>
            <person name="Kondo S."/>
            <person name="Konno H."/>
            <person name="Nakano K."/>
            <person name="Ninomiya N."/>
            <person name="Nishio T."/>
            <person name="Okada M."/>
            <person name="Plessy C."/>
            <person name="Shibata K."/>
            <person name="Shiraki T."/>
            <person name="Suzuki S."/>
            <person name="Tagami M."/>
            <person name="Waki K."/>
            <person name="Watahiki A."/>
            <person name="Okamura-Oho Y."/>
            <person name="Suzuki H."/>
            <person name="Kawai J."/>
            <person name="Hayashizaki Y."/>
        </authorList>
    </citation>
    <scope>NUCLEOTIDE SEQUENCE [LARGE SCALE MRNA] (ISOFORM 1)</scope>
    <scope>NUCLEOTIDE SEQUENCE [LARGE SCALE MRNA] OF 14-710 (ISOFORM 2)</scope>
    <source>
        <strain>C57BL/6J</strain>
        <tissue>Macrophage</tissue>
        <tissue>Mammary gland</tissue>
        <tissue>Thymus</tissue>
    </source>
</reference>
<reference key="3">
    <citation type="journal article" date="2004" name="Genome Res.">
        <title>The status, quality, and expansion of the NIH full-length cDNA project: the Mammalian Gene Collection (MGC).</title>
        <authorList>
            <consortium name="The MGC Project Team"/>
        </authorList>
    </citation>
    <scope>NUCLEOTIDE SEQUENCE [LARGE SCALE MRNA] (ISOFORM 1)</scope>
    <scope>NUCLEOTIDE SEQUENCE [LARGE SCALE MRNA] OF 7-710 (ISOFORM 2)</scope>
    <source>
        <tissue>Mammary tumor</tissue>
    </source>
</reference>
<reference key="4">
    <citation type="journal article" date="2010" name="Cell">
        <title>A tissue-specific atlas of mouse protein phosphorylation and expression.</title>
        <authorList>
            <person name="Huttlin E.L."/>
            <person name="Jedrychowski M.P."/>
            <person name="Elias J.E."/>
            <person name="Goswami T."/>
            <person name="Rad R."/>
            <person name="Beausoleil S.A."/>
            <person name="Villen J."/>
            <person name="Haas W."/>
            <person name="Sowa M.E."/>
            <person name="Gygi S.P."/>
        </authorList>
    </citation>
    <scope>IDENTIFICATION BY MASS SPECTROMETRY [LARGE SCALE ANALYSIS]</scope>
    <source>
        <tissue>Lung</tissue>
    </source>
</reference>
<reference key="5">
    <citation type="journal article" date="2018" name="Gastroenterology">
        <title>Solute Carrier Organic Anion Transporter Family Member 3A1 Is a Bile Acid Efflux Transporter in Cholestasis.</title>
        <authorList>
            <person name="Pan Q."/>
            <person name="Zhang X."/>
            <person name="Zhang L."/>
            <person name="Cheng Y."/>
            <person name="Zhao N."/>
            <person name="Li F."/>
            <person name="Zhou X."/>
            <person name="Chen S."/>
            <person name="Li J."/>
            <person name="Xu S."/>
            <person name="Huang D."/>
            <person name="Chen Y."/>
            <person name="Li L."/>
            <person name="Wang H."/>
            <person name="Chen W."/>
            <person name="Cai S.Y."/>
            <person name="Boyer J.L."/>
            <person name="Chai J."/>
        </authorList>
    </citation>
    <scope>DISRUPTION PHENOTYPE</scope>
</reference>
<gene>
    <name type="primary">Slco3a1</name>
    <name type="synonym">Oatp3a1</name>
    <name type="synonym">Oatpd</name>
    <name type="synonym">Slc21a11</name>
</gene>
<accession>Q8R3L5</accession>
<accession>Q3TLX2</accession>
<accession>Q3U7W0</accession>
<accession>Q505P2</accession>
<accession>Q544H3</accession>
<accession>Q9CTV3</accession>
<accession>Q9JKV0</accession>
<dbReference type="EMBL" id="AF226324">
    <property type="protein sequence ID" value="AAF35370.1"/>
    <property type="molecule type" value="mRNA"/>
</dbReference>
<dbReference type="EMBL" id="AK020010">
    <property type="protein sequence ID" value="BAB31965.1"/>
    <property type="molecule type" value="mRNA"/>
</dbReference>
<dbReference type="EMBL" id="AK037938">
    <property type="protein sequence ID" value="BAC29904.1"/>
    <property type="molecule type" value="mRNA"/>
</dbReference>
<dbReference type="EMBL" id="AK152488">
    <property type="protein sequence ID" value="BAE31259.1"/>
    <property type="molecule type" value="mRNA"/>
</dbReference>
<dbReference type="EMBL" id="AK166266">
    <property type="protein sequence ID" value="BAE38670.1"/>
    <property type="molecule type" value="mRNA"/>
</dbReference>
<dbReference type="EMBL" id="BC025059">
    <property type="protein sequence ID" value="AAH25059.1"/>
    <property type="molecule type" value="mRNA"/>
</dbReference>
<dbReference type="EMBL" id="BC094464">
    <property type="protein sequence ID" value="AAH94464.1"/>
    <property type="molecule type" value="mRNA"/>
</dbReference>
<dbReference type="CCDS" id="CCDS21366.1">
    <molecule id="Q8R3L5-2"/>
</dbReference>
<dbReference type="CCDS" id="CCDS21367.1">
    <molecule id="Q8R3L5-1"/>
</dbReference>
<dbReference type="RefSeq" id="NP_001033732.1">
    <molecule id="Q8R3L5-2"/>
    <property type="nucleotide sequence ID" value="NM_001038643.1"/>
</dbReference>
<dbReference type="RefSeq" id="NP_076397.2">
    <molecule id="Q8R3L5-1"/>
    <property type="nucleotide sequence ID" value="NM_023908.2"/>
</dbReference>
<dbReference type="SMR" id="Q8R3L5"/>
<dbReference type="BioGRID" id="223842">
    <property type="interactions" value="1"/>
</dbReference>
<dbReference type="FunCoup" id="Q8R3L5">
    <property type="interactions" value="716"/>
</dbReference>
<dbReference type="STRING" id="10090.ENSMUSP00000026897"/>
<dbReference type="GlyCosmos" id="Q8R3L5">
    <property type="glycosylation" value="7 sites, No reported glycans"/>
</dbReference>
<dbReference type="GlyGen" id="Q8R3L5">
    <property type="glycosylation" value="8 sites, 1 N-linked glycan (1 site)"/>
</dbReference>
<dbReference type="iPTMnet" id="Q8R3L5"/>
<dbReference type="PhosphoSitePlus" id="Q8R3L5"/>
<dbReference type="SwissPalm" id="Q8R3L5"/>
<dbReference type="PaxDb" id="10090-ENSMUSP00000026897"/>
<dbReference type="ProteomicsDB" id="261311">
    <molecule id="Q8R3L5-1"/>
</dbReference>
<dbReference type="ProteomicsDB" id="261312">
    <molecule id="Q8R3L5-2"/>
</dbReference>
<dbReference type="Pumba" id="Q8R3L5"/>
<dbReference type="Antibodypedia" id="29012">
    <property type="antibodies" value="67 antibodies from 16 providers"/>
</dbReference>
<dbReference type="DNASU" id="108116"/>
<dbReference type="Ensembl" id="ENSMUST00000026897.14">
    <molecule id="Q8R3L5-1"/>
    <property type="protein sequence ID" value="ENSMUSP00000026897.8"/>
    <property type="gene ID" value="ENSMUSG00000025790.15"/>
</dbReference>
<dbReference type="Ensembl" id="ENSMUST00000098371.9">
    <molecule id="Q8R3L5-2"/>
    <property type="protein sequence ID" value="ENSMUSP00000095973.3"/>
    <property type="gene ID" value="ENSMUSG00000025790.15"/>
</dbReference>
<dbReference type="GeneID" id="108116"/>
<dbReference type="KEGG" id="mmu:108116"/>
<dbReference type="UCSC" id="uc009hwf.1">
    <molecule id="Q8R3L5-2"/>
    <property type="organism name" value="mouse"/>
</dbReference>
<dbReference type="UCSC" id="uc009hwg.1">
    <molecule id="Q8R3L5-1"/>
    <property type="organism name" value="mouse"/>
</dbReference>
<dbReference type="AGR" id="MGI:1351867"/>
<dbReference type="CTD" id="28232"/>
<dbReference type="MGI" id="MGI:1351867">
    <property type="gene designation" value="Slco3a1"/>
</dbReference>
<dbReference type="VEuPathDB" id="HostDB:ENSMUSG00000025790"/>
<dbReference type="eggNOG" id="KOG3626">
    <property type="taxonomic scope" value="Eukaryota"/>
</dbReference>
<dbReference type="GeneTree" id="ENSGT01130000278312"/>
<dbReference type="HOGENOM" id="CLU_008954_3_0_1"/>
<dbReference type="InParanoid" id="Q8R3L5"/>
<dbReference type="OMA" id="NINCECQ"/>
<dbReference type="OrthoDB" id="5062115at2759"/>
<dbReference type="PhylomeDB" id="Q8R3L5"/>
<dbReference type="TreeFam" id="TF317540"/>
<dbReference type="Reactome" id="R-MMU-879518">
    <property type="pathway name" value="Transport of organic anions"/>
</dbReference>
<dbReference type="BioGRID-ORCS" id="108116">
    <property type="hits" value="0 hits in 81 CRISPR screens"/>
</dbReference>
<dbReference type="ChiTaRS" id="Slco3a1">
    <property type="organism name" value="mouse"/>
</dbReference>
<dbReference type="PRO" id="PR:Q8R3L5"/>
<dbReference type="Proteomes" id="UP000000589">
    <property type="component" value="Chromosome 7"/>
</dbReference>
<dbReference type="RNAct" id="Q8R3L5">
    <property type="molecule type" value="protein"/>
</dbReference>
<dbReference type="Bgee" id="ENSMUSG00000025790">
    <property type="expression patterns" value="Expressed in superior cervical ganglion and 252 other cell types or tissues"/>
</dbReference>
<dbReference type="ExpressionAtlas" id="Q8R3L5">
    <property type="expression patterns" value="baseline and differential"/>
</dbReference>
<dbReference type="GO" id="GO:0016324">
    <property type="term" value="C:apical plasma membrane"/>
    <property type="evidence" value="ECO:0000266"/>
    <property type="project" value="MGI"/>
</dbReference>
<dbReference type="GO" id="GO:0009925">
    <property type="term" value="C:basal plasma membrane"/>
    <property type="evidence" value="ECO:0000266"/>
    <property type="project" value="MGI"/>
</dbReference>
<dbReference type="GO" id="GO:0016323">
    <property type="term" value="C:basolateral plasma membrane"/>
    <property type="evidence" value="ECO:0007669"/>
    <property type="project" value="UniProtKB-SubCell"/>
</dbReference>
<dbReference type="GO" id="GO:0009986">
    <property type="term" value="C:cell surface"/>
    <property type="evidence" value="ECO:0000266"/>
    <property type="project" value="MGI"/>
</dbReference>
<dbReference type="GO" id="GO:0005886">
    <property type="term" value="C:plasma membrane"/>
    <property type="evidence" value="ECO:0000266"/>
    <property type="project" value="MGI"/>
</dbReference>
<dbReference type="GO" id="GO:0035673">
    <property type="term" value="F:oligopeptide transmembrane transporter activity"/>
    <property type="evidence" value="ECO:0000266"/>
    <property type="project" value="MGI"/>
</dbReference>
<dbReference type="GO" id="GO:0008514">
    <property type="term" value="F:organic anion transmembrane transporter activity"/>
    <property type="evidence" value="ECO:0000266"/>
    <property type="project" value="MGI"/>
</dbReference>
<dbReference type="GO" id="GO:0015132">
    <property type="term" value="F:prostaglandin transmembrane transporter activity"/>
    <property type="evidence" value="ECO:0000250"/>
    <property type="project" value="UniProtKB"/>
</dbReference>
<dbReference type="GO" id="GO:0006811">
    <property type="term" value="P:monoatomic ion transport"/>
    <property type="evidence" value="ECO:0007669"/>
    <property type="project" value="UniProtKB-KW"/>
</dbReference>
<dbReference type="GO" id="GO:0006857">
    <property type="term" value="P:oligopeptide transport"/>
    <property type="evidence" value="ECO:0000266"/>
    <property type="project" value="MGI"/>
</dbReference>
<dbReference type="GO" id="GO:0015711">
    <property type="term" value="P:organic anion transport"/>
    <property type="evidence" value="ECO:0000266"/>
    <property type="project" value="MGI"/>
</dbReference>
<dbReference type="GO" id="GO:0043123">
    <property type="term" value="P:positive regulation of canonical NF-kappaB signal transduction"/>
    <property type="evidence" value="ECO:0007669"/>
    <property type="project" value="Ensembl"/>
</dbReference>
<dbReference type="GO" id="GO:0043410">
    <property type="term" value="P:positive regulation of MAPK cascade"/>
    <property type="evidence" value="ECO:0007669"/>
    <property type="project" value="Ensembl"/>
</dbReference>
<dbReference type="CDD" id="cd17402">
    <property type="entry name" value="MFS_SLCO3_OATP3"/>
    <property type="match status" value="1"/>
</dbReference>
<dbReference type="Gene3D" id="1.20.1250.20">
    <property type="entry name" value="MFS general substrate transporter like domains"/>
    <property type="match status" value="1"/>
</dbReference>
<dbReference type="InterPro" id="IPR002350">
    <property type="entry name" value="Kazal_dom"/>
</dbReference>
<dbReference type="InterPro" id="IPR036058">
    <property type="entry name" value="Kazal_dom_sf"/>
</dbReference>
<dbReference type="InterPro" id="IPR036259">
    <property type="entry name" value="MFS_trans_sf"/>
</dbReference>
<dbReference type="InterPro" id="IPR004156">
    <property type="entry name" value="OATP"/>
</dbReference>
<dbReference type="NCBIfam" id="TIGR00805">
    <property type="entry name" value="oat"/>
    <property type="match status" value="1"/>
</dbReference>
<dbReference type="PANTHER" id="PTHR11388">
    <property type="entry name" value="ORGANIC ANION TRANSPORTER"/>
    <property type="match status" value="1"/>
</dbReference>
<dbReference type="PANTHER" id="PTHR11388:SF86">
    <property type="entry name" value="SOLUTE CARRIER ORGANIC ANION TRANSPORTER FAMILY MEMBER 3A1"/>
    <property type="match status" value="1"/>
</dbReference>
<dbReference type="Pfam" id="PF07648">
    <property type="entry name" value="Kazal_2"/>
    <property type="match status" value="1"/>
</dbReference>
<dbReference type="Pfam" id="PF03137">
    <property type="entry name" value="OATP"/>
    <property type="match status" value="1"/>
</dbReference>
<dbReference type="SUPFAM" id="SSF100895">
    <property type="entry name" value="Kazal-type serine protease inhibitors"/>
    <property type="match status" value="1"/>
</dbReference>
<dbReference type="SUPFAM" id="SSF103473">
    <property type="entry name" value="MFS general substrate transporter"/>
    <property type="match status" value="1"/>
</dbReference>
<dbReference type="PROSITE" id="PS51465">
    <property type="entry name" value="KAZAL_2"/>
    <property type="match status" value="1"/>
</dbReference>
<proteinExistence type="evidence at protein level"/>